<proteinExistence type="inferred from homology"/>
<feature type="chain" id="PRO_1000049027" description="Large ribosomal subunit protein bL20">
    <location>
        <begin position="1"/>
        <end position="119"/>
    </location>
</feature>
<accession>A1B4C1</accession>
<keyword id="KW-1185">Reference proteome</keyword>
<keyword id="KW-0687">Ribonucleoprotein</keyword>
<keyword id="KW-0689">Ribosomal protein</keyword>
<keyword id="KW-0694">RNA-binding</keyword>
<keyword id="KW-0699">rRNA-binding</keyword>
<comment type="function">
    <text evidence="1">Binds directly to 23S ribosomal RNA and is necessary for the in vitro assembly process of the 50S ribosomal subunit. It is not involved in the protein synthesizing functions of that subunit.</text>
</comment>
<comment type="similarity">
    <text evidence="1">Belongs to the bacterial ribosomal protein bL20 family.</text>
</comment>
<sequence>MARVKSGKITHARHKKVLDAAKGYYGNRSRNFRTATQAVDKANQYATRDRKTRKRNFRALWIQRINAAVRAVDAEMTYSRFIAALAKAGIEVDRKVLADLAVHEPEAFAAVVAQAKAAA</sequence>
<reference key="1">
    <citation type="submission" date="2006-12" db="EMBL/GenBank/DDBJ databases">
        <title>Complete sequence of chromosome 1 of Paracoccus denitrificans PD1222.</title>
        <authorList>
            <person name="Copeland A."/>
            <person name="Lucas S."/>
            <person name="Lapidus A."/>
            <person name="Barry K."/>
            <person name="Detter J.C."/>
            <person name="Glavina del Rio T."/>
            <person name="Hammon N."/>
            <person name="Israni S."/>
            <person name="Dalin E."/>
            <person name="Tice H."/>
            <person name="Pitluck S."/>
            <person name="Munk A.C."/>
            <person name="Brettin T."/>
            <person name="Bruce D."/>
            <person name="Han C."/>
            <person name="Tapia R."/>
            <person name="Gilna P."/>
            <person name="Schmutz J."/>
            <person name="Larimer F."/>
            <person name="Land M."/>
            <person name="Hauser L."/>
            <person name="Kyrpides N."/>
            <person name="Lykidis A."/>
            <person name="Spiro S."/>
            <person name="Richardson D.J."/>
            <person name="Moir J.W.B."/>
            <person name="Ferguson S.J."/>
            <person name="van Spanning R.J.M."/>
            <person name="Richardson P."/>
        </authorList>
    </citation>
    <scope>NUCLEOTIDE SEQUENCE [LARGE SCALE GENOMIC DNA]</scope>
    <source>
        <strain>Pd 1222</strain>
    </source>
</reference>
<dbReference type="EMBL" id="CP000489">
    <property type="protein sequence ID" value="ABL70365.1"/>
    <property type="molecule type" value="Genomic_DNA"/>
</dbReference>
<dbReference type="RefSeq" id="WP_011748559.1">
    <property type="nucleotide sequence ID" value="NC_008686.1"/>
</dbReference>
<dbReference type="SMR" id="A1B4C1"/>
<dbReference type="STRING" id="318586.Pden_2273"/>
<dbReference type="EnsemblBacteria" id="ABL70365">
    <property type="protein sequence ID" value="ABL70365"/>
    <property type="gene ID" value="Pden_2273"/>
</dbReference>
<dbReference type="GeneID" id="93450672"/>
<dbReference type="KEGG" id="pde:Pden_2273"/>
<dbReference type="eggNOG" id="COG0292">
    <property type="taxonomic scope" value="Bacteria"/>
</dbReference>
<dbReference type="HOGENOM" id="CLU_123265_0_1_5"/>
<dbReference type="OrthoDB" id="9808966at2"/>
<dbReference type="Proteomes" id="UP000000361">
    <property type="component" value="Chromosome 1"/>
</dbReference>
<dbReference type="GO" id="GO:1990904">
    <property type="term" value="C:ribonucleoprotein complex"/>
    <property type="evidence" value="ECO:0007669"/>
    <property type="project" value="UniProtKB-KW"/>
</dbReference>
<dbReference type="GO" id="GO:0005840">
    <property type="term" value="C:ribosome"/>
    <property type="evidence" value="ECO:0007669"/>
    <property type="project" value="UniProtKB-KW"/>
</dbReference>
<dbReference type="GO" id="GO:0019843">
    <property type="term" value="F:rRNA binding"/>
    <property type="evidence" value="ECO:0007669"/>
    <property type="project" value="UniProtKB-UniRule"/>
</dbReference>
<dbReference type="GO" id="GO:0003735">
    <property type="term" value="F:structural constituent of ribosome"/>
    <property type="evidence" value="ECO:0007669"/>
    <property type="project" value="InterPro"/>
</dbReference>
<dbReference type="GO" id="GO:0000027">
    <property type="term" value="P:ribosomal large subunit assembly"/>
    <property type="evidence" value="ECO:0007669"/>
    <property type="project" value="UniProtKB-UniRule"/>
</dbReference>
<dbReference type="GO" id="GO:0006412">
    <property type="term" value="P:translation"/>
    <property type="evidence" value="ECO:0007669"/>
    <property type="project" value="InterPro"/>
</dbReference>
<dbReference type="CDD" id="cd07026">
    <property type="entry name" value="Ribosomal_L20"/>
    <property type="match status" value="1"/>
</dbReference>
<dbReference type="FunFam" id="1.10.1900.20:FF:000001">
    <property type="entry name" value="50S ribosomal protein L20"/>
    <property type="match status" value="1"/>
</dbReference>
<dbReference type="Gene3D" id="6.10.160.10">
    <property type="match status" value="1"/>
</dbReference>
<dbReference type="Gene3D" id="1.10.1900.20">
    <property type="entry name" value="Ribosomal protein L20"/>
    <property type="match status" value="1"/>
</dbReference>
<dbReference type="HAMAP" id="MF_00382">
    <property type="entry name" value="Ribosomal_bL20"/>
    <property type="match status" value="1"/>
</dbReference>
<dbReference type="InterPro" id="IPR005813">
    <property type="entry name" value="Ribosomal_bL20"/>
</dbReference>
<dbReference type="InterPro" id="IPR049946">
    <property type="entry name" value="RIBOSOMAL_L20_CS"/>
</dbReference>
<dbReference type="InterPro" id="IPR035566">
    <property type="entry name" value="Ribosomal_protein_bL20_C"/>
</dbReference>
<dbReference type="NCBIfam" id="TIGR01032">
    <property type="entry name" value="rplT_bact"/>
    <property type="match status" value="1"/>
</dbReference>
<dbReference type="PANTHER" id="PTHR10986">
    <property type="entry name" value="39S RIBOSOMAL PROTEIN L20"/>
    <property type="match status" value="1"/>
</dbReference>
<dbReference type="Pfam" id="PF00453">
    <property type="entry name" value="Ribosomal_L20"/>
    <property type="match status" value="1"/>
</dbReference>
<dbReference type="PRINTS" id="PR00062">
    <property type="entry name" value="RIBOSOMALL20"/>
</dbReference>
<dbReference type="SUPFAM" id="SSF74731">
    <property type="entry name" value="Ribosomal protein L20"/>
    <property type="match status" value="1"/>
</dbReference>
<dbReference type="PROSITE" id="PS00937">
    <property type="entry name" value="RIBOSOMAL_L20"/>
    <property type="match status" value="1"/>
</dbReference>
<protein>
    <recommendedName>
        <fullName evidence="1">Large ribosomal subunit protein bL20</fullName>
    </recommendedName>
    <alternativeName>
        <fullName evidence="2">50S ribosomal protein L20</fullName>
    </alternativeName>
</protein>
<gene>
    <name evidence="1" type="primary">rplT</name>
    <name type="ordered locus">Pden_2273</name>
</gene>
<evidence type="ECO:0000255" key="1">
    <source>
        <dbReference type="HAMAP-Rule" id="MF_00382"/>
    </source>
</evidence>
<evidence type="ECO:0000305" key="2"/>
<organism>
    <name type="scientific">Paracoccus denitrificans (strain Pd 1222)</name>
    <dbReference type="NCBI Taxonomy" id="318586"/>
    <lineage>
        <taxon>Bacteria</taxon>
        <taxon>Pseudomonadati</taxon>
        <taxon>Pseudomonadota</taxon>
        <taxon>Alphaproteobacteria</taxon>
        <taxon>Rhodobacterales</taxon>
        <taxon>Paracoccaceae</taxon>
        <taxon>Paracoccus</taxon>
    </lineage>
</organism>
<name>RL20_PARDP</name>